<comment type="catalytic activity">
    <reaction>
        <text>a quinone + sn-glycerol 3-phosphate = dihydroxyacetone phosphate + a quinol</text>
        <dbReference type="Rhea" id="RHEA:18977"/>
        <dbReference type="ChEBI" id="CHEBI:24646"/>
        <dbReference type="ChEBI" id="CHEBI:57597"/>
        <dbReference type="ChEBI" id="CHEBI:57642"/>
        <dbReference type="ChEBI" id="CHEBI:132124"/>
        <dbReference type="EC" id="1.1.5.3"/>
    </reaction>
</comment>
<comment type="cofactor">
    <cofactor evidence="1">
        <name>FAD</name>
        <dbReference type="ChEBI" id="CHEBI:57692"/>
    </cofactor>
</comment>
<comment type="subcellular location">
    <subcellularLocation>
        <location evidence="1">Cytoplasm</location>
    </subcellularLocation>
</comment>
<comment type="similarity">
    <text evidence="2">Belongs to the FAD-dependent glycerol-3-phosphate dehydrogenase family.</text>
</comment>
<evidence type="ECO:0000250" key="1"/>
<evidence type="ECO:0000305" key="2"/>
<feature type="chain" id="PRO_0000427174" description="Glycerol-3-phosphate dehydrogenase 2">
    <location>
        <begin position="1"/>
        <end position="585"/>
    </location>
</feature>
<feature type="binding site" evidence="1">
    <location>
        <begin position="37"/>
        <end position="65"/>
    </location>
    <ligand>
        <name>FAD</name>
        <dbReference type="ChEBI" id="CHEBI:57692"/>
    </ligand>
</feature>
<gene>
    <name type="primary">glpD2</name>
    <name type="ordered locus">MT3401</name>
</gene>
<dbReference type="EC" id="1.1.5.3"/>
<dbReference type="EMBL" id="AE000516">
    <property type="protein sequence ID" value="AAK47744.1"/>
    <property type="molecule type" value="Genomic_DNA"/>
</dbReference>
<dbReference type="PIR" id="H70533">
    <property type="entry name" value="H70533"/>
</dbReference>
<dbReference type="RefSeq" id="WP_003417217.1">
    <property type="nucleotide sequence ID" value="NZ_KK341227.1"/>
</dbReference>
<dbReference type="SMR" id="P9WN78"/>
<dbReference type="KEGG" id="mtc:MT3401"/>
<dbReference type="PATRIC" id="fig|83331.31.peg.3660"/>
<dbReference type="HOGENOM" id="CLU_015740_5_1_11"/>
<dbReference type="Proteomes" id="UP000001020">
    <property type="component" value="Chromosome"/>
</dbReference>
<dbReference type="GO" id="GO:0005737">
    <property type="term" value="C:cytoplasm"/>
    <property type="evidence" value="ECO:0007669"/>
    <property type="project" value="UniProtKB-SubCell"/>
</dbReference>
<dbReference type="GO" id="GO:0004368">
    <property type="term" value="F:glycerol-3-phosphate dehydrogenase (quinone) activity"/>
    <property type="evidence" value="ECO:0007669"/>
    <property type="project" value="UniProtKB-EC"/>
</dbReference>
<dbReference type="GO" id="GO:0006071">
    <property type="term" value="P:glycerol metabolic process"/>
    <property type="evidence" value="ECO:0007669"/>
    <property type="project" value="UniProtKB-KW"/>
</dbReference>
<dbReference type="GO" id="GO:0046168">
    <property type="term" value="P:glycerol-3-phosphate catabolic process"/>
    <property type="evidence" value="ECO:0007669"/>
    <property type="project" value="TreeGrafter"/>
</dbReference>
<dbReference type="FunFam" id="1.10.8.870:FF:000003">
    <property type="entry name" value="Glycerol-3-phosphate dehydrogenase"/>
    <property type="match status" value="1"/>
</dbReference>
<dbReference type="Gene3D" id="1.10.8.870">
    <property type="entry name" value="Alpha-glycerophosphate oxidase, cap domain"/>
    <property type="match status" value="1"/>
</dbReference>
<dbReference type="Gene3D" id="3.30.9.10">
    <property type="entry name" value="D-Amino Acid Oxidase, subunit A, domain 2"/>
    <property type="match status" value="1"/>
</dbReference>
<dbReference type="Gene3D" id="3.50.50.60">
    <property type="entry name" value="FAD/NAD(P)-binding domain"/>
    <property type="match status" value="1"/>
</dbReference>
<dbReference type="InterPro" id="IPR031656">
    <property type="entry name" value="DAO_C"/>
</dbReference>
<dbReference type="InterPro" id="IPR038299">
    <property type="entry name" value="DAO_C_sf"/>
</dbReference>
<dbReference type="InterPro" id="IPR006076">
    <property type="entry name" value="FAD-dep_OxRdtase"/>
</dbReference>
<dbReference type="InterPro" id="IPR036188">
    <property type="entry name" value="FAD/NAD-bd_sf"/>
</dbReference>
<dbReference type="InterPro" id="IPR000447">
    <property type="entry name" value="G3P_DH_FAD-dep"/>
</dbReference>
<dbReference type="PANTHER" id="PTHR11985">
    <property type="entry name" value="GLYCEROL-3-PHOSPHATE DEHYDROGENASE"/>
    <property type="match status" value="1"/>
</dbReference>
<dbReference type="PANTHER" id="PTHR11985:SF31">
    <property type="entry name" value="GLYCEROL-3-PHOSPHATE DEHYDROGENASE 2"/>
    <property type="match status" value="1"/>
</dbReference>
<dbReference type="Pfam" id="PF01266">
    <property type="entry name" value="DAO"/>
    <property type="match status" value="1"/>
</dbReference>
<dbReference type="Pfam" id="PF16901">
    <property type="entry name" value="DAO_C"/>
    <property type="match status" value="1"/>
</dbReference>
<dbReference type="PRINTS" id="PR01001">
    <property type="entry name" value="FADG3PDH"/>
</dbReference>
<dbReference type="SUPFAM" id="SSF51905">
    <property type="entry name" value="FAD/NAD(P)-binding domain"/>
    <property type="match status" value="1"/>
</dbReference>
<dbReference type="PROSITE" id="PS00977">
    <property type="entry name" value="FAD_G3PDH_1"/>
    <property type="match status" value="1"/>
</dbReference>
<dbReference type="PROSITE" id="PS00978">
    <property type="entry name" value="FAD_G3PDH_2"/>
    <property type="match status" value="1"/>
</dbReference>
<reference key="1">
    <citation type="journal article" date="2002" name="J. Bacteriol.">
        <title>Whole-genome comparison of Mycobacterium tuberculosis clinical and laboratory strains.</title>
        <authorList>
            <person name="Fleischmann R.D."/>
            <person name="Alland D."/>
            <person name="Eisen J.A."/>
            <person name="Carpenter L."/>
            <person name="White O."/>
            <person name="Peterson J.D."/>
            <person name="DeBoy R.T."/>
            <person name="Dodson R.J."/>
            <person name="Gwinn M.L."/>
            <person name="Haft D.H."/>
            <person name="Hickey E.K."/>
            <person name="Kolonay J.F."/>
            <person name="Nelson W.C."/>
            <person name="Umayam L.A."/>
            <person name="Ermolaeva M.D."/>
            <person name="Salzberg S.L."/>
            <person name="Delcher A."/>
            <person name="Utterback T.R."/>
            <person name="Weidman J.F."/>
            <person name="Khouri H.M."/>
            <person name="Gill J."/>
            <person name="Mikula A."/>
            <person name="Bishai W."/>
            <person name="Jacobs W.R. Jr."/>
            <person name="Venter J.C."/>
            <person name="Fraser C.M."/>
        </authorList>
    </citation>
    <scope>NUCLEOTIDE SEQUENCE [LARGE SCALE GENOMIC DNA]</scope>
    <source>
        <strain>CDC 1551 / Oshkosh</strain>
    </source>
</reference>
<name>GLPD2_MYCTO</name>
<keyword id="KW-0963">Cytoplasm</keyword>
<keyword id="KW-0274">FAD</keyword>
<keyword id="KW-0285">Flavoprotein</keyword>
<keyword id="KW-0319">Glycerol metabolism</keyword>
<keyword id="KW-0560">Oxidoreductase</keyword>
<keyword id="KW-1185">Reference proteome</keyword>
<protein>
    <recommendedName>
        <fullName>Glycerol-3-phosphate dehydrogenase 2</fullName>
        <ecNumber>1.1.5.3</ecNumber>
    </recommendedName>
</protein>
<proteinExistence type="inferred from homology"/>
<accession>P9WN78</accession>
<accession>L0TDR3</accession>
<accession>O07168</accession>
<accession>P64184</accession>
<organism>
    <name type="scientific">Mycobacterium tuberculosis (strain CDC 1551 / Oshkosh)</name>
    <dbReference type="NCBI Taxonomy" id="83331"/>
    <lineage>
        <taxon>Bacteria</taxon>
        <taxon>Bacillati</taxon>
        <taxon>Actinomycetota</taxon>
        <taxon>Actinomycetes</taxon>
        <taxon>Mycobacteriales</taxon>
        <taxon>Mycobacteriaceae</taxon>
        <taxon>Mycobacterium</taxon>
        <taxon>Mycobacterium tuberculosis complex</taxon>
    </lineage>
</organism>
<sequence length="585" mass="62778">MSNPIQAPDGGQGWPAAALGPAQRAVAWKRLGTEQFDVVVIGGGVVGSGCALDAATRGLKVALVEARDLASGTSSRSSKMFHGGLRYLEQLEFGLVREALYERELSLTTLAPHLVKPLPFLFPLTKRWWERPYIAAGIFLYDRLGGAKSVPAQRHFTRAGALRLSPGLKRSSLIGGIRYYDTVVDDARHTMTVARTAAHYGAVVRCSTQVVALLREGDRVIGVGVRDSENGAVAEVRGHVVVNATGVWTDEIQALSKQRGRFQVRASKGVHVVVPRDRIVSDVAMILRTEKSVMFVIPWGSHWIIGTTDTDWNLDLAHPAATKADIDYILGTVNAVLATPLTHADIDGVYAGLRPLLAGESDDTSKLSREHAVAVPAAGLVAIAGGKYTTYRVMAADAIDAAVQFIPARVAPSITEKVSLLGADGYFALVNQAEHVGALQGLHPYRVRHLLDRYGSLISDVLAMAASDPSLLSPITEAPGYLKVEAAYAAAAEGALHLEDILARRMRISIEYPHRGVDCAREVAEVVAPVLGWTAADIDREVANYMARVEAEVLSQAQPDDVSADMLRASAPEARAEILEPVPLD</sequence>